<evidence type="ECO:0000255" key="1">
    <source>
        <dbReference type="HAMAP-Rule" id="MF_01044"/>
    </source>
</evidence>
<accession>B1IPA0</accession>
<dbReference type="EMBL" id="CP000946">
    <property type="protein sequence ID" value="ACA76026.1"/>
    <property type="molecule type" value="Genomic_DNA"/>
</dbReference>
<dbReference type="RefSeq" id="WP_000185258.1">
    <property type="nucleotide sequence ID" value="NZ_MTFT01000001.1"/>
</dbReference>
<dbReference type="SMR" id="B1IPA0"/>
<dbReference type="GeneID" id="93778633"/>
<dbReference type="KEGG" id="ecl:EcolC_0348"/>
<dbReference type="HOGENOM" id="CLU_056916_0_0_6"/>
<dbReference type="GO" id="GO:0005886">
    <property type="term" value="C:plasma membrane"/>
    <property type="evidence" value="ECO:0007669"/>
    <property type="project" value="UniProtKB-SubCell"/>
</dbReference>
<dbReference type="GO" id="GO:0022857">
    <property type="term" value="F:transmembrane transporter activity"/>
    <property type="evidence" value="ECO:0007669"/>
    <property type="project" value="InterPro"/>
</dbReference>
<dbReference type="CDD" id="cd17333">
    <property type="entry name" value="MFS_FucP_MFSD4_like"/>
    <property type="match status" value="1"/>
</dbReference>
<dbReference type="FunFam" id="1.20.1250.20:FF:000032">
    <property type="entry name" value="Protein TsgA"/>
    <property type="match status" value="1"/>
</dbReference>
<dbReference type="FunFam" id="1.20.1250.20:FF:000052">
    <property type="entry name" value="Protein TsgA"/>
    <property type="match status" value="1"/>
</dbReference>
<dbReference type="Gene3D" id="1.20.1250.20">
    <property type="entry name" value="MFS general substrate transporter like domains"/>
    <property type="match status" value="2"/>
</dbReference>
<dbReference type="HAMAP" id="MF_01044">
    <property type="entry name" value="MFS_TsgA"/>
    <property type="match status" value="1"/>
</dbReference>
<dbReference type="InterPro" id="IPR011701">
    <property type="entry name" value="MFS"/>
</dbReference>
<dbReference type="InterPro" id="IPR020846">
    <property type="entry name" value="MFS_dom"/>
</dbReference>
<dbReference type="InterPro" id="IPR036259">
    <property type="entry name" value="MFS_trans_sf"/>
</dbReference>
<dbReference type="InterPro" id="IPR023528">
    <property type="entry name" value="MFS_TsgA"/>
</dbReference>
<dbReference type="InterPro" id="IPR050375">
    <property type="entry name" value="MFS_TsgA-like"/>
</dbReference>
<dbReference type="NCBIfam" id="NF002982">
    <property type="entry name" value="PRK03699.1"/>
    <property type="match status" value="1"/>
</dbReference>
<dbReference type="PANTHER" id="PTHR43702">
    <property type="entry name" value="L-FUCOSE-PROTON SYMPORTER"/>
    <property type="match status" value="1"/>
</dbReference>
<dbReference type="PANTHER" id="PTHR43702:SF3">
    <property type="entry name" value="PROTEIN TSGA"/>
    <property type="match status" value="1"/>
</dbReference>
<dbReference type="Pfam" id="PF07690">
    <property type="entry name" value="MFS_1"/>
    <property type="match status" value="1"/>
</dbReference>
<dbReference type="SUPFAM" id="SSF103473">
    <property type="entry name" value="MFS general substrate transporter"/>
    <property type="match status" value="1"/>
</dbReference>
<dbReference type="PROSITE" id="PS50850">
    <property type="entry name" value="MFS"/>
    <property type="match status" value="1"/>
</dbReference>
<gene>
    <name evidence="1" type="primary">tsgA</name>
    <name type="ordered locus">EcolC_0348</name>
</gene>
<organism>
    <name type="scientific">Escherichia coli (strain ATCC 8739 / DSM 1576 / NBRC 3972 / NCIMB 8545 / WDCM 00012 / Crooks)</name>
    <dbReference type="NCBI Taxonomy" id="481805"/>
    <lineage>
        <taxon>Bacteria</taxon>
        <taxon>Pseudomonadati</taxon>
        <taxon>Pseudomonadota</taxon>
        <taxon>Gammaproteobacteria</taxon>
        <taxon>Enterobacterales</taxon>
        <taxon>Enterobacteriaceae</taxon>
        <taxon>Escherichia</taxon>
    </lineage>
</organism>
<feature type="chain" id="PRO_1000084404" description="Protein TsgA">
    <location>
        <begin position="1"/>
        <end position="393"/>
    </location>
</feature>
<feature type="transmembrane region" description="Helical" evidence="1">
    <location>
        <begin position="11"/>
        <end position="31"/>
    </location>
</feature>
<feature type="transmembrane region" description="Helical" evidence="1">
    <location>
        <begin position="51"/>
        <end position="71"/>
    </location>
</feature>
<feature type="transmembrane region" description="Helical" evidence="1">
    <location>
        <begin position="78"/>
        <end position="98"/>
    </location>
</feature>
<feature type="transmembrane region" description="Helical" evidence="1">
    <location>
        <begin position="101"/>
        <end position="121"/>
    </location>
</feature>
<feature type="transmembrane region" description="Helical" evidence="1">
    <location>
        <begin position="134"/>
        <end position="154"/>
    </location>
</feature>
<feature type="transmembrane region" description="Helical" evidence="1">
    <location>
        <begin position="162"/>
        <end position="182"/>
    </location>
</feature>
<feature type="transmembrane region" description="Helical" evidence="1">
    <location>
        <begin position="206"/>
        <end position="226"/>
    </location>
</feature>
<feature type="transmembrane region" description="Helical" evidence="1">
    <location>
        <begin position="245"/>
        <end position="265"/>
    </location>
</feature>
<feature type="transmembrane region" description="Helical" evidence="1">
    <location>
        <begin position="273"/>
        <end position="293"/>
    </location>
</feature>
<feature type="transmembrane region" description="Helical" evidence="1">
    <location>
        <begin position="297"/>
        <end position="317"/>
    </location>
</feature>
<feature type="transmembrane region" description="Helical" evidence="1">
    <location>
        <begin position="332"/>
        <end position="352"/>
    </location>
</feature>
<feature type="transmembrane region" description="Helical" evidence="1">
    <location>
        <begin position="361"/>
        <end position="381"/>
    </location>
</feature>
<comment type="subcellular location">
    <subcellularLocation>
        <location evidence="1">Cell inner membrane</location>
        <topology evidence="1">Multi-pass membrane protein</topology>
    </subcellularLocation>
</comment>
<comment type="similarity">
    <text evidence="1">Belongs to the major facilitator superfamily. TsgA family.</text>
</comment>
<sequence length="393" mass="43210">MTNSNRIKLTWISFLSYALTGALVIVTGMVMGNIADYFNLPVSSMSNTFTFLNAGILISIFLNAWLMEIVPLKTQLRFGFLLMVLAVAGLMFSHSLALFSTAMFILGVVSGITMSIGTFLITQMYEGRQRGSRLLFTDSFFSMAGMIFPMIAAFLLARSIEWYWVYACIGLVYVAIFILTFGCEFPALGKHAPKTDAPVEKEKWGIGVLFLSVAALCYILGQLGFISWVPEYAKGLGMSLNDAGTLVSNFWMSYMVGMWAFSFILRFFDLQRILTVLAGLAAILMYVFNTGTPAHMAWSILALGFFSSAIYTTIITLGSQQTKVPSPKLVNFVLTCGTIGTMLTFVVTGPIVEHSGPQAALLTANGLYAVVFVMCFLLGFVSRHRQHNTLTSH</sequence>
<name>TSGA_ECOLC</name>
<protein>
    <recommendedName>
        <fullName evidence="1">Protein TsgA</fullName>
    </recommendedName>
</protein>
<reference key="1">
    <citation type="submission" date="2008-02" db="EMBL/GenBank/DDBJ databases">
        <title>Complete sequence of Escherichia coli C str. ATCC 8739.</title>
        <authorList>
            <person name="Copeland A."/>
            <person name="Lucas S."/>
            <person name="Lapidus A."/>
            <person name="Glavina del Rio T."/>
            <person name="Dalin E."/>
            <person name="Tice H."/>
            <person name="Bruce D."/>
            <person name="Goodwin L."/>
            <person name="Pitluck S."/>
            <person name="Kiss H."/>
            <person name="Brettin T."/>
            <person name="Detter J.C."/>
            <person name="Han C."/>
            <person name="Kuske C.R."/>
            <person name="Schmutz J."/>
            <person name="Larimer F."/>
            <person name="Land M."/>
            <person name="Hauser L."/>
            <person name="Kyrpides N."/>
            <person name="Mikhailova N."/>
            <person name="Ingram L."/>
            <person name="Richardson P."/>
        </authorList>
    </citation>
    <scope>NUCLEOTIDE SEQUENCE [LARGE SCALE GENOMIC DNA]</scope>
    <source>
        <strain>ATCC 8739 / DSM 1576 / NBRC 3972 / NCIMB 8545 / WDCM 00012 / Crooks</strain>
    </source>
</reference>
<keyword id="KW-0997">Cell inner membrane</keyword>
<keyword id="KW-1003">Cell membrane</keyword>
<keyword id="KW-0472">Membrane</keyword>
<keyword id="KW-0812">Transmembrane</keyword>
<keyword id="KW-1133">Transmembrane helix</keyword>
<proteinExistence type="inferred from homology"/>